<organism>
    <name type="scientific">Thermotoga neapolitana (strain ATCC 49049 / DSM 4359 / NBRC 107923 / NS-E)</name>
    <dbReference type="NCBI Taxonomy" id="309803"/>
    <lineage>
        <taxon>Bacteria</taxon>
        <taxon>Thermotogati</taxon>
        <taxon>Thermotogota</taxon>
        <taxon>Thermotogae</taxon>
        <taxon>Thermotogales</taxon>
        <taxon>Thermotogaceae</taxon>
        <taxon>Thermotoga</taxon>
    </lineage>
</organism>
<reference key="1">
    <citation type="submission" date="2007-11" db="EMBL/GenBank/DDBJ databases">
        <title>The genome sequence of the hyperthermophilic bacterium Thermotoga neapolitana.</title>
        <authorList>
            <person name="Lim S.K."/>
            <person name="Kim J.S."/>
            <person name="Cha S.H."/>
            <person name="Park B.C."/>
            <person name="Lee D.S."/>
            <person name="Tae H.S."/>
            <person name="Kim S.-J."/>
            <person name="Kim J.J."/>
            <person name="Park K.J."/>
            <person name="Lee S.Y."/>
        </authorList>
    </citation>
    <scope>NUCLEOTIDE SEQUENCE [LARGE SCALE GENOMIC DNA]</scope>
    <source>
        <strain>ATCC 49049 / DSM 4359 / NBRC 107923 / NS-E</strain>
    </source>
</reference>
<accession>B9K9S0</accession>
<name>HIS7_THENN</name>
<sequence>MTVERIENGVIVQRNTKEIEISITLDTVHGKLEGSTGVNFFDHLLNTFCHYSGLGLRVSTCESKDGILHHLIEDFGISLGQAFRELFDYTKVKRFGEASVPMNEALIGCYVDLSGRPFFQKNFEFSVEKIEDMPVEGFEEFMNGFVNHARITVHFFKFFGKNDHHISESAMKSFGLAIARALERSDTRTTKGVID</sequence>
<gene>
    <name evidence="1" type="primary">hisB</name>
    <name type="ordered locus">CTN_1527</name>
</gene>
<feature type="chain" id="PRO_1000190626" description="Imidazoleglycerol-phosphate dehydratase">
    <location>
        <begin position="1"/>
        <end position="195"/>
    </location>
</feature>
<proteinExistence type="inferred from homology"/>
<dbReference type="EC" id="4.2.1.19" evidence="1"/>
<dbReference type="EMBL" id="CP000916">
    <property type="protein sequence ID" value="ACM23703.1"/>
    <property type="molecule type" value="Genomic_DNA"/>
</dbReference>
<dbReference type="RefSeq" id="WP_015919992.1">
    <property type="nucleotide sequence ID" value="NC_011978.1"/>
</dbReference>
<dbReference type="SMR" id="B9K9S0"/>
<dbReference type="STRING" id="309803.CTN_1527"/>
<dbReference type="KEGG" id="tna:CTN_1527"/>
<dbReference type="eggNOG" id="COG0131">
    <property type="taxonomic scope" value="Bacteria"/>
</dbReference>
<dbReference type="HOGENOM" id="CLU_044308_2_1_0"/>
<dbReference type="UniPathway" id="UPA00031">
    <property type="reaction ID" value="UER00011"/>
</dbReference>
<dbReference type="Proteomes" id="UP000000445">
    <property type="component" value="Chromosome"/>
</dbReference>
<dbReference type="GO" id="GO:0005737">
    <property type="term" value="C:cytoplasm"/>
    <property type="evidence" value="ECO:0007669"/>
    <property type="project" value="UniProtKB-SubCell"/>
</dbReference>
<dbReference type="GO" id="GO:0004424">
    <property type="term" value="F:imidazoleglycerol-phosphate dehydratase activity"/>
    <property type="evidence" value="ECO:0007669"/>
    <property type="project" value="UniProtKB-UniRule"/>
</dbReference>
<dbReference type="GO" id="GO:0000105">
    <property type="term" value="P:L-histidine biosynthetic process"/>
    <property type="evidence" value="ECO:0007669"/>
    <property type="project" value="UniProtKB-UniRule"/>
</dbReference>
<dbReference type="FunFam" id="3.30.230.40:FF:000008">
    <property type="entry name" value="Imidazoleglycerol-phosphate dehydratase"/>
    <property type="match status" value="1"/>
</dbReference>
<dbReference type="Gene3D" id="3.30.230.40">
    <property type="entry name" value="Imidazole glycerol phosphate dehydratase, domain 1"/>
    <property type="match status" value="2"/>
</dbReference>
<dbReference type="HAMAP" id="MF_00076">
    <property type="entry name" value="HisB"/>
    <property type="match status" value="1"/>
</dbReference>
<dbReference type="InterPro" id="IPR038494">
    <property type="entry name" value="IGPD_sf"/>
</dbReference>
<dbReference type="InterPro" id="IPR000807">
    <property type="entry name" value="ImidazoleglycerolP_deHydtase"/>
</dbReference>
<dbReference type="InterPro" id="IPR020565">
    <property type="entry name" value="ImidazoleglycerP_deHydtase_CS"/>
</dbReference>
<dbReference type="InterPro" id="IPR020568">
    <property type="entry name" value="Ribosomal_Su5_D2-typ_SF"/>
</dbReference>
<dbReference type="PANTHER" id="PTHR23133:SF2">
    <property type="entry name" value="IMIDAZOLEGLYCEROL-PHOSPHATE DEHYDRATASE"/>
    <property type="match status" value="1"/>
</dbReference>
<dbReference type="PANTHER" id="PTHR23133">
    <property type="entry name" value="IMIDAZOLEGLYCEROL-PHOSPHATE DEHYDRATASE HIS7"/>
    <property type="match status" value="1"/>
</dbReference>
<dbReference type="Pfam" id="PF00475">
    <property type="entry name" value="IGPD"/>
    <property type="match status" value="1"/>
</dbReference>
<dbReference type="SUPFAM" id="SSF54211">
    <property type="entry name" value="Ribosomal protein S5 domain 2-like"/>
    <property type="match status" value="2"/>
</dbReference>
<dbReference type="PROSITE" id="PS00955">
    <property type="entry name" value="IGP_DEHYDRATASE_2"/>
    <property type="match status" value="1"/>
</dbReference>
<protein>
    <recommendedName>
        <fullName evidence="1">Imidazoleglycerol-phosphate dehydratase</fullName>
        <shortName evidence="1">IGPD</shortName>
        <ecNumber evidence="1">4.2.1.19</ecNumber>
    </recommendedName>
</protein>
<comment type="catalytic activity">
    <reaction evidence="1">
        <text>D-erythro-1-(imidazol-4-yl)glycerol 3-phosphate = 3-(imidazol-4-yl)-2-oxopropyl phosphate + H2O</text>
        <dbReference type="Rhea" id="RHEA:11040"/>
        <dbReference type="ChEBI" id="CHEBI:15377"/>
        <dbReference type="ChEBI" id="CHEBI:57766"/>
        <dbReference type="ChEBI" id="CHEBI:58278"/>
        <dbReference type="EC" id="4.2.1.19"/>
    </reaction>
</comment>
<comment type="pathway">
    <text evidence="1">Amino-acid biosynthesis; L-histidine biosynthesis; L-histidine from 5-phospho-alpha-D-ribose 1-diphosphate: step 6/9.</text>
</comment>
<comment type="subcellular location">
    <subcellularLocation>
        <location evidence="1">Cytoplasm</location>
    </subcellularLocation>
</comment>
<comment type="similarity">
    <text evidence="1">Belongs to the imidazoleglycerol-phosphate dehydratase family.</text>
</comment>
<evidence type="ECO:0000255" key="1">
    <source>
        <dbReference type="HAMAP-Rule" id="MF_00076"/>
    </source>
</evidence>
<keyword id="KW-0028">Amino-acid biosynthesis</keyword>
<keyword id="KW-0963">Cytoplasm</keyword>
<keyword id="KW-0368">Histidine biosynthesis</keyword>
<keyword id="KW-0456">Lyase</keyword>